<protein>
    <recommendedName>
        <fullName>Gene 68 protein</fullName>
    </recommendedName>
</protein>
<accession>P28964</accession>
<accession>Q6DLE3</accession>
<comment type="similarity">
    <text evidence="2">Belongs to the herpesviridae US2 family.</text>
</comment>
<gene>
    <name type="ordered locus">68</name>
</gene>
<proteinExistence type="inferred from homology"/>
<keyword id="KW-1185">Reference proteome</keyword>
<sequence length="418" mass="46789">MGVVLITVVTVVDRHKALPNSSIDVDGHLWEFLSRQCFVLASEPLGIPIVVRSADLYRFSSSLLTLPKACRPIVRTRGATAIALDRNGVVYHEDRMGVSIEWLSVLSGYNHLNSSLIINQPYHLWVLGAADLCKPVFDLIPGPKRMVYAEIADEFHKSWQPPFVCGKLFETIPWTTVEHNHPLKLRAAGGEDTVVGECGFSKHSSNSLVRPPTVKRVIYAVVDPARLREIPAPGRPLPRRRPSEGGDARPEAALARSRARSVHGRRRDAAPPRGPAGARRPPGGRRDVDGTPTLGSVRPDIHTLKGRGLSPVPHLALWVEQWFLALQKPRLYTHHRLALHNIPSILKGEKREDTFEDNRRDELRHDDSRHRRHRGLPLRARSPPQCQPAPPRLGPHLRRSRGRGGRQLQRRGGAERRA</sequence>
<organism>
    <name type="scientific">Equine herpesvirus 1 (strain Ab4p)</name>
    <name type="common">EHV-1</name>
    <name type="synonym">Equine abortion virus</name>
    <dbReference type="NCBI Taxonomy" id="31520"/>
    <lineage>
        <taxon>Viruses</taxon>
        <taxon>Duplodnaviria</taxon>
        <taxon>Heunggongvirae</taxon>
        <taxon>Peploviricota</taxon>
        <taxon>Herviviricetes</taxon>
        <taxon>Herpesvirales</taxon>
        <taxon>Orthoherpesviridae</taxon>
        <taxon>Alphaherpesvirinae</taxon>
        <taxon>Varicellovirus</taxon>
        <taxon>Varicellovirus equidalpha1</taxon>
        <taxon>Equid alphaherpesvirus 1</taxon>
    </lineage>
</organism>
<organismHost>
    <name type="scientific">Equus caballus</name>
    <name type="common">Horse</name>
    <dbReference type="NCBI Taxonomy" id="9796"/>
</organismHost>
<name>US02_EHV1B</name>
<evidence type="ECO:0000256" key="1">
    <source>
        <dbReference type="SAM" id="MobiDB-lite"/>
    </source>
</evidence>
<evidence type="ECO:0000305" key="2"/>
<dbReference type="EMBL" id="AY665713">
    <property type="protein sequence ID" value="AAT67325.1"/>
    <property type="molecule type" value="Genomic_DNA"/>
</dbReference>
<dbReference type="PIR" id="E36802">
    <property type="entry name" value="WZBEF9"/>
</dbReference>
<dbReference type="KEGG" id="vg:2948585"/>
<dbReference type="Proteomes" id="UP000001189">
    <property type="component" value="Segment"/>
</dbReference>
<dbReference type="InterPro" id="IPR003485">
    <property type="entry name" value="Herpes_US2_varicellovirus"/>
</dbReference>
<dbReference type="Pfam" id="PF02476">
    <property type="entry name" value="US2"/>
    <property type="match status" value="1"/>
</dbReference>
<reference key="1">
    <citation type="journal article" date="1992" name="Virology">
        <title>The DNA sequence of equine herpesvirus-1.</title>
        <authorList>
            <person name="Telford E.A.R."/>
            <person name="Watson M.S."/>
            <person name="McBride K."/>
            <person name="Davison A.J."/>
        </authorList>
    </citation>
    <scope>NUCLEOTIDE SEQUENCE [LARGE SCALE GENOMIC DNA]</scope>
</reference>
<feature type="chain" id="PRO_0000116128" description="Gene 68 protein">
    <location>
        <begin position="1"/>
        <end position="418"/>
    </location>
</feature>
<feature type="region of interest" description="Disordered" evidence="1">
    <location>
        <begin position="230"/>
        <end position="304"/>
    </location>
</feature>
<feature type="region of interest" description="Disordered" evidence="1">
    <location>
        <begin position="353"/>
        <end position="418"/>
    </location>
</feature>
<feature type="compositionally biased region" description="Basic and acidic residues" evidence="1">
    <location>
        <begin position="241"/>
        <end position="250"/>
    </location>
</feature>
<feature type="compositionally biased region" description="Basic residues" evidence="1">
    <location>
        <begin position="257"/>
        <end position="266"/>
    </location>
</feature>
<feature type="compositionally biased region" description="Basic and acidic residues" evidence="1">
    <location>
        <begin position="353"/>
        <end position="369"/>
    </location>
</feature>
<feature type="compositionally biased region" description="Basic residues" evidence="1">
    <location>
        <begin position="395"/>
        <end position="404"/>
    </location>
</feature>